<name>FMT_FRAP2</name>
<comment type="function">
    <text evidence="1">Attaches a formyl group to the free amino group of methionyl-tRNA(fMet). The formyl group appears to play a dual role in the initiator identity of N-formylmethionyl-tRNA by promoting its recognition by IF2 and preventing the misappropriation of this tRNA by the elongation apparatus.</text>
</comment>
<comment type="catalytic activity">
    <reaction evidence="1">
        <text>L-methionyl-tRNA(fMet) + (6R)-10-formyltetrahydrofolate = N-formyl-L-methionyl-tRNA(fMet) + (6S)-5,6,7,8-tetrahydrofolate + H(+)</text>
        <dbReference type="Rhea" id="RHEA:24380"/>
        <dbReference type="Rhea" id="RHEA-COMP:9952"/>
        <dbReference type="Rhea" id="RHEA-COMP:9953"/>
        <dbReference type="ChEBI" id="CHEBI:15378"/>
        <dbReference type="ChEBI" id="CHEBI:57453"/>
        <dbReference type="ChEBI" id="CHEBI:78530"/>
        <dbReference type="ChEBI" id="CHEBI:78844"/>
        <dbReference type="ChEBI" id="CHEBI:195366"/>
        <dbReference type="EC" id="2.1.2.9"/>
    </reaction>
</comment>
<comment type="similarity">
    <text evidence="1">Belongs to the Fmt family.</text>
</comment>
<accession>B0U0T8</accession>
<keyword id="KW-0648">Protein biosynthesis</keyword>
<keyword id="KW-0808">Transferase</keyword>
<evidence type="ECO:0000255" key="1">
    <source>
        <dbReference type="HAMAP-Rule" id="MF_00182"/>
    </source>
</evidence>
<dbReference type="EC" id="2.1.2.9" evidence="1"/>
<dbReference type="EMBL" id="CP000937">
    <property type="protein sequence ID" value="ABZ88041.1"/>
    <property type="molecule type" value="Genomic_DNA"/>
</dbReference>
<dbReference type="SMR" id="B0U0T8"/>
<dbReference type="KEGG" id="fph:Fphi_1814"/>
<dbReference type="eggNOG" id="COG0223">
    <property type="taxonomic scope" value="Bacteria"/>
</dbReference>
<dbReference type="HOGENOM" id="CLU_033347_1_2_6"/>
<dbReference type="GO" id="GO:0005829">
    <property type="term" value="C:cytosol"/>
    <property type="evidence" value="ECO:0007669"/>
    <property type="project" value="TreeGrafter"/>
</dbReference>
<dbReference type="GO" id="GO:0004479">
    <property type="term" value="F:methionyl-tRNA formyltransferase activity"/>
    <property type="evidence" value="ECO:0007669"/>
    <property type="project" value="UniProtKB-UniRule"/>
</dbReference>
<dbReference type="CDD" id="cd08646">
    <property type="entry name" value="FMT_core_Met-tRNA-FMT_N"/>
    <property type="match status" value="1"/>
</dbReference>
<dbReference type="CDD" id="cd08704">
    <property type="entry name" value="Met_tRNA_FMT_C"/>
    <property type="match status" value="1"/>
</dbReference>
<dbReference type="Gene3D" id="3.10.25.10">
    <property type="entry name" value="Formyl transferase, C-terminal domain"/>
    <property type="match status" value="1"/>
</dbReference>
<dbReference type="Gene3D" id="3.40.50.170">
    <property type="entry name" value="Formyl transferase, N-terminal domain"/>
    <property type="match status" value="1"/>
</dbReference>
<dbReference type="HAMAP" id="MF_00182">
    <property type="entry name" value="Formyl_trans"/>
    <property type="match status" value="1"/>
</dbReference>
<dbReference type="InterPro" id="IPR005794">
    <property type="entry name" value="Fmt"/>
</dbReference>
<dbReference type="InterPro" id="IPR005793">
    <property type="entry name" value="Formyl_trans_C"/>
</dbReference>
<dbReference type="InterPro" id="IPR037022">
    <property type="entry name" value="Formyl_trans_C_sf"/>
</dbReference>
<dbReference type="InterPro" id="IPR002376">
    <property type="entry name" value="Formyl_transf_N"/>
</dbReference>
<dbReference type="InterPro" id="IPR036477">
    <property type="entry name" value="Formyl_transf_N_sf"/>
</dbReference>
<dbReference type="InterPro" id="IPR011034">
    <property type="entry name" value="Formyl_transferase-like_C_sf"/>
</dbReference>
<dbReference type="InterPro" id="IPR001555">
    <property type="entry name" value="GART_AS"/>
</dbReference>
<dbReference type="InterPro" id="IPR044135">
    <property type="entry name" value="Met-tRNA-FMT_C"/>
</dbReference>
<dbReference type="InterPro" id="IPR041711">
    <property type="entry name" value="Met-tRNA-FMT_N"/>
</dbReference>
<dbReference type="NCBIfam" id="TIGR00460">
    <property type="entry name" value="fmt"/>
    <property type="match status" value="1"/>
</dbReference>
<dbReference type="PANTHER" id="PTHR11138">
    <property type="entry name" value="METHIONYL-TRNA FORMYLTRANSFERASE"/>
    <property type="match status" value="1"/>
</dbReference>
<dbReference type="PANTHER" id="PTHR11138:SF5">
    <property type="entry name" value="METHIONYL-TRNA FORMYLTRANSFERASE, MITOCHONDRIAL"/>
    <property type="match status" value="1"/>
</dbReference>
<dbReference type="Pfam" id="PF02911">
    <property type="entry name" value="Formyl_trans_C"/>
    <property type="match status" value="1"/>
</dbReference>
<dbReference type="Pfam" id="PF00551">
    <property type="entry name" value="Formyl_trans_N"/>
    <property type="match status" value="1"/>
</dbReference>
<dbReference type="SUPFAM" id="SSF50486">
    <property type="entry name" value="FMT C-terminal domain-like"/>
    <property type="match status" value="1"/>
</dbReference>
<dbReference type="SUPFAM" id="SSF53328">
    <property type="entry name" value="Formyltransferase"/>
    <property type="match status" value="1"/>
</dbReference>
<dbReference type="PROSITE" id="PS00373">
    <property type="entry name" value="GART"/>
    <property type="match status" value="1"/>
</dbReference>
<sequence length="312" mass="34865">MKKLNIVFAGTPDISAQVLKDLYQSQHNIQAVLTQPDRAKGRGKKIQFSPVKEVAIANNTLVLQPLSFKKDPQVLEQIRELKPDVIVVIAYGIIVPQEFLDIPKYGCLNIHVSLLPKWRGAAPIQRAIQAGDSKTGICIMQMDAGLDTGDILNTLEVEIQDTDTSQSLHDKFAKLSIKPLLETLENIDTIKPQPQQGEPTYAHKITKQEGLIDFTKSAKEISCHIRAFTPWPSAFFMLEGEQVKVGDFEILEKSANDEVTAIIDITKNGFDIATNDKIIRFKQLQFPNKKMLNIADILNGKDLDKYIGYKIG</sequence>
<feature type="chain" id="PRO_1000077300" description="Methionyl-tRNA formyltransferase">
    <location>
        <begin position="1"/>
        <end position="312"/>
    </location>
</feature>
<feature type="binding site" evidence="1">
    <location>
        <begin position="113"/>
        <end position="116"/>
    </location>
    <ligand>
        <name>(6S)-5,6,7,8-tetrahydrofolate</name>
        <dbReference type="ChEBI" id="CHEBI:57453"/>
    </ligand>
</feature>
<proteinExistence type="inferred from homology"/>
<protein>
    <recommendedName>
        <fullName evidence="1">Methionyl-tRNA formyltransferase</fullName>
        <ecNumber evidence="1">2.1.2.9</ecNumber>
    </recommendedName>
</protein>
<reference key="1">
    <citation type="submission" date="2007-12" db="EMBL/GenBank/DDBJ databases">
        <title>Complete sequence of chromosome of Francisella philomiragia subsp. philomiragia ATCC 25017.</title>
        <authorList>
            <consortium name="US DOE Joint Genome Institute"/>
            <person name="Copeland A."/>
            <person name="Lucas S."/>
            <person name="Lapidus A."/>
            <person name="Barry K."/>
            <person name="Detter J.C."/>
            <person name="Glavina del Rio T."/>
            <person name="Hammon N."/>
            <person name="Israni S."/>
            <person name="Dalin E."/>
            <person name="Tice H."/>
            <person name="Pitluck S."/>
            <person name="Chain P."/>
            <person name="Malfatti S."/>
            <person name="Shin M."/>
            <person name="Vergez L."/>
            <person name="Schmutz J."/>
            <person name="Larimer F."/>
            <person name="Land M."/>
            <person name="Hauser L."/>
            <person name="Richardson P."/>
        </authorList>
    </citation>
    <scope>NUCLEOTIDE SEQUENCE [LARGE SCALE GENOMIC DNA]</scope>
    <source>
        <strain>ATCC 25017 / CCUG 19701 / FSC 153 / O#319-036</strain>
    </source>
</reference>
<gene>
    <name evidence="1" type="primary">fmt</name>
    <name type="ordered locus">Fphi_1814</name>
</gene>
<organism>
    <name type="scientific">Francisella philomiragia subsp. philomiragia (strain ATCC 25017 / CCUG 19701 / FSC 153 / O#319-036)</name>
    <dbReference type="NCBI Taxonomy" id="484022"/>
    <lineage>
        <taxon>Bacteria</taxon>
        <taxon>Pseudomonadati</taxon>
        <taxon>Pseudomonadota</taxon>
        <taxon>Gammaproteobacteria</taxon>
        <taxon>Thiotrichales</taxon>
        <taxon>Francisellaceae</taxon>
        <taxon>Francisella</taxon>
    </lineage>
</organism>